<protein>
    <recommendedName>
        <fullName evidence="1">FMN-dependent NADH:quinone oxidoreductase</fullName>
        <ecNumber evidence="1">1.6.5.-</ecNumber>
    </recommendedName>
    <alternativeName>
        <fullName evidence="1">Azo-dye reductase</fullName>
    </alternativeName>
    <alternativeName>
        <fullName evidence="1">FMN-dependent NADH-azo compound oxidoreductase</fullName>
    </alternativeName>
    <alternativeName>
        <fullName evidence="1">FMN-dependent NADH-azoreductase</fullName>
        <ecNumber evidence="1">1.7.1.17</ecNumber>
    </alternativeName>
</protein>
<organism>
    <name type="scientific">Staphylococcus carnosus (strain TM300)</name>
    <dbReference type="NCBI Taxonomy" id="396513"/>
    <lineage>
        <taxon>Bacteria</taxon>
        <taxon>Bacillati</taxon>
        <taxon>Bacillota</taxon>
        <taxon>Bacilli</taxon>
        <taxon>Bacillales</taxon>
        <taxon>Staphylococcaceae</taxon>
        <taxon>Staphylococcus</taxon>
    </lineage>
</organism>
<feature type="chain" id="PRO_1000164766" description="FMN-dependent NADH:quinone oxidoreductase">
    <location>
        <begin position="1"/>
        <end position="208"/>
    </location>
</feature>
<feature type="binding site" evidence="1">
    <location>
        <begin position="17"/>
        <end position="19"/>
    </location>
    <ligand>
        <name>FMN</name>
        <dbReference type="ChEBI" id="CHEBI:58210"/>
    </ligand>
</feature>
<feature type="binding site" evidence="1">
    <location>
        <begin position="99"/>
        <end position="102"/>
    </location>
    <ligand>
        <name>FMN</name>
        <dbReference type="ChEBI" id="CHEBI:58210"/>
    </ligand>
</feature>
<feature type="binding site" evidence="1">
    <location>
        <begin position="143"/>
        <end position="146"/>
    </location>
    <ligand>
        <name>FMN</name>
        <dbReference type="ChEBI" id="CHEBI:58210"/>
    </ligand>
</feature>
<reference key="1">
    <citation type="journal article" date="2009" name="Appl. Environ. Microbiol.">
        <title>Genome analysis of the meat starter culture bacterium Staphylococcus carnosus TM300.</title>
        <authorList>
            <person name="Rosenstein R."/>
            <person name="Nerz C."/>
            <person name="Biswas L."/>
            <person name="Resch A."/>
            <person name="Raddatz G."/>
            <person name="Schuster S.C."/>
            <person name="Goetz F."/>
        </authorList>
    </citation>
    <scope>NUCLEOTIDE SEQUENCE [LARGE SCALE GENOMIC DNA]</scope>
    <source>
        <strain>TM300</strain>
    </source>
</reference>
<proteinExistence type="inferred from homology"/>
<gene>
    <name evidence="1" type="primary">azoR</name>
    <name type="ordered locus">Sca_2006</name>
</gene>
<keyword id="KW-0285">Flavoprotein</keyword>
<keyword id="KW-0288">FMN</keyword>
<keyword id="KW-0520">NAD</keyword>
<keyword id="KW-0560">Oxidoreductase</keyword>
<keyword id="KW-1185">Reference proteome</keyword>
<evidence type="ECO:0000255" key="1">
    <source>
        <dbReference type="HAMAP-Rule" id="MF_01216"/>
    </source>
</evidence>
<sequence>MSQVIYITAHPLDEMVSNSMAVGKAFIESYQESHPDDEVIHIDLFKDEVPEIDADVFSGWGKLQNGETLTEVEQHKVSRLTEIVDQFVSADKYVIATPMWNLSFPPAVKRYFDAVSVAGKSFKYTSEGPQGLLTDKTALHIQSRGGFYSEGPAAEVEMGDRYIRTIFSFLGVPKYKLIAVEGHNKVPERAEEIKLNAIQQAESFAKEF</sequence>
<dbReference type="EC" id="1.6.5.-" evidence="1"/>
<dbReference type="EC" id="1.7.1.17" evidence="1"/>
<dbReference type="EMBL" id="AM295250">
    <property type="protein sequence ID" value="CAL28911.1"/>
    <property type="molecule type" value="Genomic_DNA"/>
</dbReference>
<dbReference type="RefSeq" id="WP_015901247.1">
    <property type="nucleotide sequence ID" value="NC_012121.1"/>
</dbReference>
<dbReference type="SMR" id="B9DKM7"/>
<dbReference type="GeneID" id="93794460"/>
<dbReference type="KEGG" id="sca:SCA_2006"/>
<dbReference type="eggNOG" id="COG1182">
    <property type="taxonomic scope" value="Bacteria"/>
</dbReference>
<dbReference type="HOGENOM" id="CLU_088964_3_1_9"/>
<dbReference type="OrthoDB" id="9805013at2"/>
<dbReference type="BioCyc" id="SCAR396513:SCA_RS10155-MONOMER"/>
<dbReference type="Proteomes" id="UP000000444">
    <property type="component" value="Chromosome"/>
</dbReference>
<dbReference type="GO" id="GO:0009055">
    <property type="term" value="F:electron transfer activity"/>
    <property type="evidence" value="ECO:0007669"/>
    <property type="project" value="UniProtKB-UniRule"/>
</dbReference>
<dbReference type="GO" id="GO:0010181">
    <property type="term" value="F:FMN binding"/>
    <property type="evidence" value="ECO:0007669"/>
    <property type="project" value="UniProtKB-UniRule"/>
</dbReference>
<dbReference type="GO" id="GO:0016652">
    <property type="term" value="F:oxidoreductase activity, acting on NAD(P)H as acceptor"/>
    <property type="evidence" value="ECO:0007669"/>
    <property type="project" value="UniProtKB-UniRule"/>
</dbReference>
<dbReference type="GO" id="GO:0016655">
    <property type="term" value="F:oxidoreductase activity, acting on NAD(P)H, quinone or similar compound as acceptor"/>
    <property type="evidence" value="ECO:0007669"/>
    <property type="project" value="InterPro"/>
</dbReference>
<dbReference type="Gene3D" id="3.40.50.360">
    <property type="match status" value="1"/>
</dbReference>
<dbReference type="HAMAP" id="MF_01216">
    <property type="entry name" value="Azoreductase_type1"/>
    <property type="match status" value="1"/>
</dbReference>
<dbReference type="InterPro" id="IPR003680">
    <property type="entry name" value="Flavodoxin_fold"/>
</dbReference>
<dbReference type="InterPro" id="IPR029039">
    <property type="entry name" value="Flavoprotein-like_sf"/>
</dbReference>
<dbReference type="InterPro" id="IPR050104">
    <property type="entry name" value="FMN-dep_NADH:Q_OxRdtase_AzoR1"/>
</dbReference>
<dbReference type="InterPro" id="IPR023048">
    <property type="entry name" value="NADH:quinone_OxRdtase_FMN_depd"/>
</dbReference>
<dbReference type="NCBIfam" id="NF010075">
    <property type="entry name" value="PRK13556.1"/>
    <property type="match status" value="1"/>
</dbReference>
<dbReference type="PANTHER" id="PTHR43741">
    <property type="entry name" value="FMN-DEPENDENT NADH-AZOREDUCTASE 1"/>
    <property type="match status" value="1"/>
</dbReference>
<dbReference type="PANTHER" id="PTHR43741:SF7">
    <property type="entry name" value="FMN-DEPENDENT NADH:QUINONE OXIDOREDUCTASE"/>
    <property type="match status" value="1"/>
</dbReference>
<dbReference type="Pfam" id="PF02525">
    <property type="entry name" value="Flavodoxin_2"/>
    <property type="match status" value="1"/>
</dbReference>
<dbReference type="SUPFAM" id="SSF52218">
    <property type="entry name" value="Flavoproteins"/>
    <property type="match status" value="1"/>
</dbReference>
<accession>B9DKM7</accession>
<comment type="function">
    <text evidence="1">Quinone reductase that provides resistance to thiol-specific stress caused by electrophilic quinones.</text>
</comment>
<comment type="function">
    <text evidence="1">Also exhibits azoreductase activity. Catalyzes the reductive cleavage of the azo bond in aromatic azo compounds to the corresponding amines.</text>
</comment>
<comment type="catalytic activity">
    <reaction evidence="1">
        <text>2 a quinone + NADH + H(+) = 2 a 1,4-benzosemiquinone + NAD(+)</text>
        <dbReference type="Rhea" id="RHEA:65952"/>
        <dbReference type="ChEBI" id="CHEBI:15378"/>
        <dbReference type="ChEBI" id="CHEBI:57540"/>
        <dbReference type="ChEBI" id="CHEBI:57945"/>
        <dbReference type="ChEBI" id="CHEBI:132124"/>
        <dbReference type="ChEBI" id="CHEBI:134225"/>
    </reaction>
</comment>
<comment type="catalytic activity">
    <reaction evidence="1">
        <text>N,N-dimethyl-1,4-phenylenediamine + anthranilate + 2 NAD(+) = 2-(4-dimethylaminophenyl)diazenylbenzoate + 2 NADH + 2 H(+)</text>
        <dbReference type="Rhea" id="RHEA:55872"/>
        <dbReference type="ChEBI" id="CHEBI:15378"/>
        <dbReference type="ChEBI" id="CHEBI:15783"/>
        <dbReference type="ChEBI" id="CHEBI:16567"/>
        <dbReference type="ChEBI" id="CHEBI:57540"/>
        <dbReference type="ChEBI" id="CHEBI:57945"/>
        <dbReference type="ChEBI" id="CHEBI:71579"/>
        <dbReference type="EC" id="1.7.1.17"/>
    </reaction>
</comment>
<comment type="cofactor">
    <cofactor evidence="1">
        <name>FMN</name>
        <dbReference type="ChEBI" id="CHEBI:58210"/>
    </cofactor>
    <text evidence="1">Binds 1 FMN per subunit.</text>
</comment>
<comment type="subunit">
    <text evidence="1">Homodimer.</text>
</comment>
<comment type="similarity">
    <text evidence="1">Belongs to the azoreductase type 1 family.</text>
</comment>
<name>AZOR_STACT</name>